<name>AMP2_PAEAL</name>
<proteinExistence type="evidence at protein level"/>
<protein>
    <recommendedName>
        <fullName evidence="2">Antimicrobial protein AN5-2</fullName>
    </recommendedName>
</protein>
<comment type="function">
    <text evidence="1">Has bactericidal activity against Gram-positive bacteria L.plantarum ATCC 8014 and B.cereus ATCC 14579 as well as against Gram-negative bacteria E.coli ATCC 25922 and S.enteritidis ATCC 13076.</text>
</comment>
<comment type="biophysicochemical properties">
    <phDependence>
        <text evidence="1">Active between pH 2 and 12.</text>
    </phDependence>
    <temperatureDependence>
        <text evidence="1">Active between 40 and 90 degrees Celsius. Activity is reduced at 90 degrees Celsius and absent at 100 degrees Celsius.</text>
    </temperatureDependence>
</comment>
<comment type="mass spectrometry" mass="1330.77" method="Electrospray" evidence="1"/>
<sequence length="12" mass="1332">FCKSLPLPLSVK</sequence>
<reference key="1">
    <citation type="journal article" date="2014" name="World J. Microbiol. Biotechnol.">
        <title>Isolation and identification of a new intracellular antimicrobial peptide produced by Paenibacillus alvei AN5.</title>
        <authorList>
            <person name="Alkotaini B."/>
            <person name="Anuar N."/>
            <person name="Kadhum A.A."/>
            <person name="Sani A.A."/>
        </authorList>
    </citation>
    <scope>PROTEIN SEQUENCE</scope>
    <scope>FUNCTION</scope>
    <scope>BIOPHYSICOCHEMICAL PROPERTIES</scope>
    <scope>MASS SPECTROMETRY</scope>
    <scope>IDENTIFICATION BY MASS SPECTROMETRY</scope>
    <source>
        <strain evidence="2">AN5</strain>
    </source>
</reference>
<feature type="peptide" id="PRO_0000419698" description="Antimicrobial protein AN5-2" evidence="1">
    <location>
        <begin position="1"/>
        <end position="12"/>
    </location>
</feature>
<keyword id="KW-0044">Antibiotic</keyword>
<keyword id="KW-0929">Antimicrobial</keyword>
<keyword id="KW-0903">Direct protein sequencing</keyword>
<accession>B3EWQ7</accession>
<dbReference type="GO" id="GO:0042742">
    <property type="term" value="P:defense response to bacterium"/>
    <property type="evidence" value="ECO:0007669"/>
    <property type="project" value="UniProtKB-KW"/>
</dbReference>
<organism evidence="2">
    <name type="scientific">Paenibacillus alvei</name>
    <name type="common">Bacillus alvei</name>
    <dbReference type="NCBI Taxonomy" id="44250"/>
    <lineage>
        <taxon>Bacteria</taxon>
        <taxon>Bacillati</taxon>
        <taxon>Bacillota</taxon>
        <taxon>Bacilli</taxon>
        <taxon>Bacillales</taxon>
        <taxon>Paenibacillaceae</taxon>
        <taxon>Paenibacillus</taxon>
    </lineage>
</organism>
<evidence type="ECO:0000269" key="1">
    <source>
    </source>
</evidence>
<evidence type="ECO:0000303" key="2">
    <source>
    </source>
</evidence>